<comment type="function">
    <text evidence="1">Probably acts as a transcriptional activator. Binds to the GCC-box pathogenesis-related promoter element. May be involved in the regulation of gene expression by stress factors and by components of stress signal transduction pathways (By similarity).</text>
</comment>
<comment type="interaction">
    <interactant intactId="EBI-4433324">
        <id>Q8GW17</id>
    </interactant>
    <interactant intactId="EBI-617095">
        <id>Q9LEZ3</id>
        <label>BIM1</label>
    </interactant>
    <organismsDiffer>false</organismsDiffer>
    <experiments>3</experiments>
</comment>
<comment type="subcellular location">
    <subcellularLocation>
        <location evidence="3">Nucleus</location>
    </subcellularLocation>
</comment>
<comment type="similarity">
    <text evidence="3">Belongs to the AP2/ERF transcription factor family. ERF subfamily.</text>
</comment>
<comment type="sequence caution" evidence="3">
    <conflict type="erroneous gene model prediction">
        <sequence resource="EMBL-CDS" id="AAG50818"/>
    </conflict>
</comment>
<protein>
    <recommendedName>
        <fullName>Ethylene-responsive transcription factor ERF116</fullName>
    </recommendedName>
</protein>
<keyword id="KW-0010">Activator</keyword>
<keyword id="KW-0238">DNA-binding</keyword>
<keyword id="KW-0936">Ethylene signaling pathway</keyword>
<keyword id="KW-0539">Nucleus</keyword>
<keyword id="KW-1185">Reference proteome</keyword>
<keyword id="KW-0804">Transcription</keyword>
<keyword id="KW-0805">Transcription regulation</keyword>
<feature type="chain" id="PRO_0000290427" description="Ethylene-responsive transcription factor ERF116">
    <location>
        <begin position="1"/>
        <end position="287"/>
    </location>
</feature>
<feature type="DNA-binding region" description="AP2/ERF" evidence="2">
    <location>
        <begin position="80"/>
        <end position="140"/>
    </location>
</feature>
<reference key="1">
    <citation type="journal article" date="2000" name="Nature">
        <title>Sequence and analysis of chromosome 1 of the plant Arabidopsis thaliana.</title>
        <authorList>
            <person name="Theologis A."/>
            <person name="Ecker J.R."/>
            <person name="Palm C.J."/>
            <person name="Federspiel N.A."/>
            <person name="Kaul S."/>
            <person name="White O."/>
            <person name="Alonso J."/>
            <person name="Altafi H."/>
            <person name="Araujo R."/>
            <person name="Bowman C.L."/>
            <person name="Brooks S.Y."/>
            <person name="Buehler E."/>
            <person name="Chan A."/>
            <person name="Chao Q."/>
            <person name="Chen H."/>
            <person name="Cheuk R.F."/>
            <person name="Chin C.W."/>
            <person name="Chung M.K."/>
            <person name="Conn L."/>
            <person name="Conway A.B."/>
            <person name="Conway A.R."/>
            <person name="Creasy T.H."/>
            <person name="Dewar K."/>
            <person name="Dunn P."/>
            <person name="Etgu P."/>
            <person name="Feldblyum T.V."/>
            <person name="Feng J.-D."/>
            <person name="Fong B."/>
            <person name="Fujii C.Y."/>
            <person name="Gill J.E."/>
            <person name="Goldsmith A.D."/>
            <person name="Haas B."/>
            <person name="Hansen N.F."/>
            <person name="Hughes B."/>
            <person name="Huizar L."/>
            <person name="Hunter J.L."/>
            <person name="Jenkins J."/>
            <person name="Johnson-Hopson C."/>
            <person name="Khan S."/>
            <person name="Khaykin E."/>
            <person name="Kim C.J."/>
            <person name="Koo H.L."/>
            <person name="Kremenetskaia I."/>
            <person name="Kurtz D.B."/>
            <person name="Kwan A."/>
            <person name="Lam B."/>
            <person name="Langin-Hooper S."/>
            <person name="Lee A."/>
            <person name="Lee J.M."/>
            <person name="Lenz C.A."/>
            <person name="Li J.H."/>
            <person name="Li Y.-P."/>
            <person name="Lin X."/>
            <person name="Liu S.X."/>
            <person name="Liu Z.A."/>
            <person name="Luros J.S."/>
            <person name="Maiti R."/>
            <person name="Marziali A."/>
            <person name="Militscher J."/>
            <person name="Miranda M."/>
            <person name="Nguyen M."/>
            <person name="Nierman W.C."/>
            <person name="Osborne B.I."/>
            <person name="Pai G."/>
            <person name="Peterson J."/>
            <person name="Pham P.K."/>
            <person name="Rizzo M."/>
            <person name="Rooney T."/>
            <person name="Rowley D."/>
            <person name="Sakano H."/>
            <person name="Salzberg S.L."/>
            <person name="Schwartz J.R."/>
            <person name="Shinn P."/>
            <person name="Southwick A.M."/>
            <person name="Sun H."/>
            <person name="Tallon L.J."/>
            <person name="Tambunga G."/>
            <person name="Toriumi M.J."/>
            <person name="Town C.D."/>
            <person name="Utterback T."/>
            <person name="Van Aken S."/>
            <person name="Vaysberg M."/>
            <person name="Vysotskaia V.S."/>
            <person name="Walker M."/>
            <person name="Wu D."/>
            <person name="Yu G."/>
            <person name="Fraser C.M."/>
            <person name="Venter J.C."/>
            <person name="Davis R.W."/>
        </authorList>
    </citation>
    <scope>NUCLEOTIDE SEQUENCE [LARGE SCALE GENOMIC DNA]</scope>
    <source>
        <strain>cv. Columbia</strain>
    </source>
</reference>
<reference key="2">
    <citation type="journal article" date="2017" name="Plant J.">
        <title>Araport11: a complete reannotation of the Arabidopsis thaliana reference genome.</title>
        <authorList>
            <person name="Cheng C.Y."/>
            <person name="Krishnakumar V."/>
            <person name="Chan A.P."/>
            <person name="Thibaud-Nissen F."/>
            <person name="Schobel S."/>
            <person name="Town C.D."/>
        </authorList>
    </citation>
    <scope>GENOME REANNOTATION</scope>
    <source>
        <strain>cv. Columbia</strain>
    </source>
</reference>
<reference key="3">
    <citation type="journal article" date="2002" name="Science">
        <title>Functional annotation of a full-length Arabidopsis cDNA collection.</title>
        <authorList>
            <person name="Seki M."/>
            <person name="Narusaka M."/>
            <person name="Kamiya A."/>
            <person name="Ishida J."/>
            <person name="Satou M."/>
            <person name="Sakurai T."/>
            <person name="Nakajima M."/>
            <person name="Enju A."/>
            <person name="Akiyama K."/>
            <person name="Oono Y."/>
            <person name="Muramatsu M."/>
            <person name="Hayashizaki Y."/>
            <person name="Kawai J."/>
            <person name="Carninci P."/>
            <person name="Itoh M."/>
            <person name="Ishii Y."/>
            <person name="Arakawa T."/>
            <person name="Shibata K."/>
            <person name="Shinagawa A."/>
            <person name="Shinozaki K."/>
        </authorList>
    </citation>
    <scope>NUCLEOTIDE SEQUENCE [LARGE SCALE MRNA]</scope>
    <source>
        <strain>cv. Columbia</strain>
    </source>
</reference>
<reference key="4">
    <citation type="journal article" date="2003" name="Science">
        <title>Empirical analysis of transcriptional activity in the Arabidopsis genome.</title>
        <authorList>
            <person name="Yamada K."/>
            <person name="Lim J."/>
            <person name="Dale J.M."/>
            <person name="Chen H."/>
            <person name="Shinn P."/>
            <person name="Palm C.J."/>
            <person name="Southwick A.M."/>
            <person name="Wu H.C."/>
            <person name="Kim C.J."/>
            <person name="Nguyen M."/>
            <person name="Pham P.K."/>
            <person name="Cheuk R.F."/>
            <person name="Karlin-Newmann G."/>
            <person name="Liu S.X."/>
            <person name="Lam B."/>
            <person name="Sakano H."/>
            <person name="Wu T."/>
            <person name="Yu G."/>
            <person name="Miranda M."/>
            <person name="Quach H.L."/>
            <person name="Tripp M."/>
            <person name="Chang C.H."/>
            <person name="Lee J.M."/>
            <person name="Toriumi M.J."/>
            <person name="Chan M.M."/>
            <person name="Tang C.C."/>
            <person name="Onodera C.S."/>
            <person name="Deng J.M."/>
            <person name="Akiyama K."/>
            <person name="Ansari Y."/>
            <person name="Arakawa T."/>
            <person name="Banh J."/>
            <person name="Banno F."/>
            <person name="Bowser L."/>
            <person name="Brooks S.Y."/>
            <person name="Carninci P."/>
            <person name="Chao Q."/>
            <person name="Choy N."/>
            <person name="Enju A."/>
            <person name="Goldsmith A.D."/>
            <person name="Gurjal M."/>
            <person name="Hansen N.F."/>
            <person name="Hayashizaki Y."/>
            <person name="Johnson-Hopson C."/>
            <person name="Hsuan V.W."/>
            <person name="Iida K."/>
            <person name="Karnes M."/>
            <person name="Khan S."/>
            <person name="Koesema E."/>
            <person name="Ishida J."/>
            <person name="Jiang P.X."/>
            <person name="Jones T."/>
            <person name="Kawai J."/>
            <person name="Kamiya A."/>
            <person name="Meyers C."/>
            <person name="Nakajima M."/>
            <person name="Narusaka M."/>
            <person name="Seki M."/>
            <person name="Sakurai T."/>
            <person name="Satou M."/>
            <person name="Tamse R."/>
            <person name="Vaysberg M."/>
            <person name="Wallender E.K."/>
            <person name="Wong C."/>
            <person name="Yamamura Y."/>
            <person name="Yuan S."/>
            <person name="Shinozaki K."/>
            <person name="Davis R.W."/>
            <person name="Theologis A."/>
            <person name="Ecker J.R."/>
        </authorList>
    </citation>
    <scope>NUCLEOTIDE SEQUENCE [LARGE SCALE MRNA]</scope>
    <source>
        <strain>cv. Columbia</strain>
    </source>
</reference>
<reference key="5">
    <citation type="journal article" date="2006" name="Plant Physiol.">
        <title>Genome-wide analysis of the ERF gene family in Arabidopsis and rice.</title>
        <authorList>
            <person name="Nakano T."/>
            <person name="Suzuki K."/>
            <person name="Fujimura T."/>
            <person name="Shinshi H."/>
        </authorList>
    </citation>
    <scope>GENE FAMILY</scope>
    <scope>NOMENCLATURE</scope>
</reference>
<organism>
    <name type="scientific">Arabidopsis thaliana</name>
    <name type="common">Mouse-ear cress</name>
    <dbReference type="NCBI Taxonomy" id="3702"/>
    <lineage>
        <taxon>Eukaryota</taxon>
        <taxon>Viridiplantae</taxon>
        <taxon>Streptophyta</taxon>
        <taxon>Embryophyta</taxon>
        <taxon>Tracheophyta</taxon>
        <taxon>Spermatophyta</taxon>
        <taxon>Magnoliopsida</taxon>
        <taxon>eudicotyledons</taxon>
        <taxon>Gunneridae</taxon>
        <taxon>Pentapetalae</taxon>
        <taxon>rosids</taxon>
        <taxon>malvids</taxon>
        <taxon>Brassicales</taxon>
        <taxon>Brassicaceae</taxon>
        <taxon>Camelineae</taxon>
        <taxon>Arabidopsis</taxon>
    </lineage>
</organism>
<evidence type="ECO:0000250" key="1"/>
<evidence type="ECO:0000255" key="2">
    <source>
        <dbReference type="PROSITE-ProRule" id="PRU00366"/>
    </source>
</evidence>
<evidence type="ECO:0000305" key="3"/>
<gene>
    <name type="primary">ERF116</name>
    <name type="ordered locus">At1g25470</name>
    <name type="ORF">F2J7.8</name>
</gene>
<dbReference type="EMBL" id="AC079281">
    <property type="protein sequence ID" value="AAG50818.1"/>
    <property type="status" value="ALT_SEQ"/>
    <property type="molecule type" value="Genomic_DNA"/>
</dbReference>
<dbReference type="EMBL" id="CP002684">
    <property type="protein sequence ID" value="AEE30628.1"/>
    <property type="molecule type" value="Genomic_DNA"/>
</dbReference>
<dbReference type="EMBL" id="CP002684">
    <property type="protein sequence ID" value="AEE30629.1"/>
    <property type="molecule type" value="Genomic_DNA"/>
</dbReference>
<dbReference type="EMBL" id="AK119144">
    <property type="protein sequence ID" value="BAC43714.1"/>
    <property type="molecule type" value="mRNA"/>
</dbReference>
<dbReference type="EMBL" id="BT005281">
    <property type="protein sequence ID" value="AAO63345.1"/>
    <property type="molecule type" value="mRNA"/>
</dbReference>
<dbReference type="PIR" id="H86384">
    <property type="entry name" value="H86384"/>
</dbReference>
<dbReference type="SMR" id="Q8GW17"/>
<dbReference type="BioGRID" id="24370">
    <property type="interactions" value="3"/>
</dbReference>
<dbReference type="FunCoup" id="Q8GW17">
    <property type="interactions" value="89"/>
</dbReference>
<dbReference type="IntAct" id="Q8GW17">
    <property type="interactions" value="3"/>
</dbReference>
<dbReference type="STRING" id="3702.Q8GW17"/>
<dbReference type="PaxDb" id="3702-AT1G25470.1"/>
<dbReference type="EnsemblPlants" id="AT1G25470.1">
    <property type="protein sequence ID" value="AT1G25470.1"/>
    <property type="gene ID" value="AT1G25470"/>
</dbReference>
<dbReference type="EnsemblPlants" id="AT1G25470.2">
    <property type="protein sequence ID" value="AT1G25470.2"/>
    <property type="gene ID" value="AT1G25470"/>
</dbReference>
<dbReference type="GeneID" id="839133"/>
<dbReference type="Gramene" id="AT1G25470.1">
    <property type="protein sequence ID" value="AT1G25470.1"/>
    <property type="gene ID" value="AT1G25470"/>
</dbReference>
<dbReference type="Gramene" id="AT1G25470.2">
    <property type="protein sequence ID" value="AT1G25470.2"/>
    <property type="gene ID" value="AT1G25470"/>
</dbReference>
<dbReference type="KEGG" id="ath:AT1G25470"/>
<dbReference type="Araport" id="AT1G25470"/>
<dbReference type="TAIR" id="AT1G25470">
    <property type="gene designation" value="CRF12"/>
</dbReference>
<dbReference type="eggNOG" id="ENOG502RZ0C">
    <property type="taxonomic scope" value="Eukaryota"/>
</dbReference>
<dbReference type="HOGENOM" id="CLU_062946_0_1_1"/>
<dbReference type="InParanoid" id="Q8GW17"/>
<dbReference type="OMA" id="KKWLGTY"/>
<dbReference type="PhylomeDB" id="Q8GW17"/>
<dbReference type="PRO" id="PR:Q8GW17"/>
<dbReference type="Proteomes" id="UP000006548">
    <property type="component" value="Chromosome 1"/>
</dbReference>
<dbReference type="ExpressionAtlas" id="Q8GW17">
    <property type="expression patterns" value="baseline and differential"/>
</dbReference>
<dbReference type="GO" id="GO:0005634">
    <property type="term" value="C:nucleus"/>
    <property type="evidence" value="ECO:0007669"/>
    <property type="project" value="UniProtKB-SubCell"/>
</dbReference>
<dbReference type="GO" id="GO:0003700">
    <property type="term" value="F:DNA-binding transcription factor activity"/>
    <property type="evidence" value="ECO:0000250"/>
    <property type="project" value="TAIR"/>
</dbReference>
<dbReference type="GO" id="GO:0000976">
    <property type="term" value="F:transcription cis-regulatory region binding"/>
    <property type="evidence" value="ECO:0000353"/>
    <property type="project" value="TAIR"/>
</dbReference>
<dbReference type="GO" id="GO:0009873">
    <property type="term" value="P:ethylene-activated signaling pathway"/>
    <property type="evidence" value="ECO:0007669"/>
    <property type="project" value="UniProtKB-KW"/>
</dbReference>
<dbReference type="GO" id="GO:0009555">
    <property type="term" value="P:pollen development"/>
    <property type="evidence" value="ECO:0000315"/>
    <property type="project" value="TAIR"/>
</dbReference>
<dbReference type="CDD" id="cd00018">
    <property type="entry name" value="AP2"/>
    <property type="match status" value="1"/>
</dbReference>
<dbReference type="Gene3D" id="3.30.730.10">
    <property type="entry name" value="AP2/ERF domain"/>
    <property type="match status" value="1"/>
</dbReference>
<dbReference type="InterPro" id="IPR017392">
    <property type="entry name" value="AP2/ERF-transcript_factor"/>
</dbReference>
<dbReference type="InterPro" id="IPR001471">
    <property type="entry name" value="AP2/ERF_dom"/>
</dbReference>
<dbReference type="InterPro" id="IPR036955">
    <property type="entry name" value="AP2/ERF_dom_sf"/>
</dbReference>
<dbReference type="InterPro" id="IPR050913">
    <property type="entry name" value="AP2/ERF_ERF_subfamily"/>
</dbReference>
<dbReference type="InterPro" id="IPR016177">
    <property type="entry name" value="DNA-bd_dom_sf"/>
</dbReference>
<dbReference type="PANTHER" id="PTHR31194:SF70">
    <property type="entry name" value="ETHYLENE-RESPONSIVE TRANSCRIPTION FACTOR ERF116"/>
    <property type="match status" value="1"/>
</dbReference>
<dbReference type="PANTHER" id="PTHR31194">
    <property type="entry name" value="SHN SHINE , DNA BINDING / TRANSCRIPTION FACTOR"/>
    <property type="match status" value="1"/>
</dbReference>
<dbReference type="PIRSF" id="PIRSF038123">
    <property type="entry name" value="PTI6"/>
    <property type="match status" value="1"/>
</dbReference>
<dbReference type="SMART" id="SM00380">
    <property type="entry name" value="AP2"/>
    <property type="match status" value="1"/>
</dbReference>
<dbReference type="SUPFAM" id="SSF54171">
    <property type="entry name" value="DNA-binding domain"/>
    <property type="match status" value="1"/>
</dbReference>
<dbReference type="PROSITE" id="PS51032">
    <property type="entry name" value="AP2_ERF"/>
    <property type="match status" value="1"/>
</dbReference>
<sequence>MKSFVKPERDSLLRTVRIVFTDPDATDDSSSSSDEWLPKPRKVKRFVHEITFLPQVSESSQDRSNAVKTPRRKSTRQFKYPVGVRPRPSGKFAAEILNPFTKTKKWLGTYETPAEAEKAYVDKKVEYDALASSGSAVSSSVVTVTSQCLRSPTSASVSCVSADDLSKEKTSLNKDVAASGDSTTKEVFTTFDFSDVKIPDLRFLAAEEDSMVSNANGAELDFDCFLTDSNILLDDYSLLENDINFSRFENSLPSELPDCDFTEMEFQLDDFKFAYTDHLTTPPLGLV</sequence>
<accession>Q8GW17</accession>
<accession>Q9C6L7</accession>
<name>EF116_ARATH</name>
<proteinExistence type="evidence at protein level"/>